<protein>
    <recommendedName>
        <fullName>Tubulin beta chain</fullName>
    </recommendedName>
    <alternativeName>
        <fullName>Beta-tubulin</fullName>
    </alternativeName>
</protein>
<gene>
    <name type="primary">TUB1</name>
</gene>
<organism>
    <name type="scientific">Dothistroma septosporum</name>
    <name type="common">Red band needle blight fungus</name>
    <name type="synonym">Mycosphaerella pini</name>
    <dbReference type="NCBI Taxonomy" id="64363"/>
    <lineage>
        <taxon>Eukaryota</taxon>
        <taxon>Fungi</taxon>
        <taxon>Dikarya</taxon>
        <taxon>Ascomycota</taxon>
        <taxon>Pezizomycotina</taxon>
        <taxon>Dothideomycetes</taxon>
        <taxon>Dothideomycetidae</taxon>
        <taxon>Mycosphaerellales</taxon>
        <taxon>Mycosphaerellaceae</taxon>
        <taxon>Dothistroma</taxon>
    </lineage>
</organism>
<accession>O42786</accession>
<reference key="1">
    <citation type="submission" date="1998-01" db="EMBL/GenBank/DDBJ databases">
        <title>The beta-tubulin gene, tub1, of Dothistroma pini (anamorphic form of Mycosphaerella pini).</title>
        <authorList>
            <person name="Bidlake A."/>
            <person name="Monahan B.J."/>
            <person name="Bradshaw R.E."/>
        </authorList>
    </citation>
    <scope>NUCLEOTIDE SEQUENCE [GENOMIC DNA]</scope>
    <source>
        <strain>DP1</strain>
    </source>
</reference>
<sequence length="447" mass="49777">MREIVHLQTGQCGNQIGAAFWQTISGEHGLDGSGVYNGTSDLQLERMNVYFNEASGNKYVPRAVLVDLEPGTMDAVRAGPFGQLFRPDNFVFGQSGAGNNWAKGHYTEGAELVDQVLDVVRREAEGCDCLQGFQITHSLGGGTGAGMGTLLISKIREEFPDRMMATFSVMPSPKVSDTVVEPYNATLSVHQLVENSDETFCIDNEALYDICMRTLKLNNPSYGDLNHLVSAVMSGVTTCLRFPGQLNSDLRKLAVNMVPFPRLHFFMVGFAPLTSRGAHSFRAVTVPELTQQIFDPKNMMAASDFRNGRYLTCSAIYRGKVSMKEVEDQIRNVQNKNTAYFVEWIPNNVQTALCSIPPRGLKMSSTFVGNSTSIQELFKRVGDQFTAMFRRKAFLHWYTGEGMDEMEFTEAESNMNDLVSEYQQYQEASVSEGEEEYDEEAPLEGEE</sequence>
<dbReference type="EMBL" id="AF044975">
    <property type="protein sequence ID" value="AAC02112.1"/>
    <property type="molecule type" value="Genomic_DNA"/>
</dbReference>
<dbReference type="SMR" id="O42786"/>
<dbReference type="OMA" id="WVPRSVN"/>
<dbReference type="GO" id="GO:0005737">
    <property type="term" value="C:cytoplasm"/>
    <property type="evidence" value="ECO:0007669"/>
    <property type="project" value="UniProtKB-KW"/>
</dbReference>
<dbReference type="GO" id="GO:0005874">
    <property type="term" value="C:microtubule"/>
    <property type="evidence" value="ECO:0007669"/>
    <property type="project" value="UniProtKB-KW"/>
</dbReference>
<dbReference type="GO" id="GO:0005525">
    <property type="term" value="F:GTP binding"/>
    <property type="evidence" value="ECO:0007669"/>
    <property type="project" value="UniProtKB-KW"/>
</dbReference>
<dbReference type="GO" id="GO:0003924">
    <property type="term" value="F:GTPase activity"/>
    <property type="evidence" value="ECO:0007669"/>
    <property type="project" value="InterPro"/>
</dbReference>
<dbReference type="GO" id="GO:0046872">
    <property type="term" value="F:metal ion binding"/>
    <property type="evidence" value="ECO:0007669"/>
    <property type="project" value="UniProtKB-KW"/>
</dbReference>
<dbReference type="GO" id="GO:0005200">
    <property type="term" value="F:structural constituent of cytoskeleton"/>
    <property type="evidence" value="ECO:0007669"/>
    <property type="project" value="InterPro"/>
</dbReference>
<dbReference type="GO" id="GO:0007017">
    <property type="term" value="P:microtubule-based process"/>
    <property type="evidence" value="ECO:0007669"/>
    <property type="project" value="InterPro"/>
</dbReference>
<dbReference type="CDD" id="cd02187">
    <property type="entry name" value="beta_tubulin"/>
    <property type="match status" value="1"/>
</dbReference>
<dbReference type="FunFam" id="1.10.287.600:FF:000003">
    <property type="entry name" value="Tubulin beta chain"/>
    <property type="match status" value="1"/>
</dbReference>
<dbReference type="FunFam" id="3.30.1330.20:FF:000002">
    <property type="entry name" value="Tubulin beta chain"/>
    <property type="match status" value="1"/>
</dbReference>
<dbReference type="FunFam" id="3.40.50.1440:FF:000009">
    <property type="entry name" value="Tubulin beta chain"/>
    <property type="match status" value="1"/>
</dbReference>
<dbReference type="Gene3D" id="1.10.287.600">
    <property type="entry name" value="Helix hairpin bin"/>
    <property type="match status" value="1"/>
</dbReference>
<dbReference type="Gene3D" id="3.30.1330.20">
    <property type="entry name" value="Tubulin/FtsZ, C-terminal domain"/>
    <property type="match status" value="1"/>
</dbReference>
<dbReference type="Gene3D" id="3.40.50.1440">
    <property type="entry name" value="Tubulin/FtsZ, GTPase domain"/>
    <property type="match status" value="1"/>
</dbReference>
<dbReference type="InterPro" id="IPR013838">
    <property type="entry name" value="Beta-tubulin_BS"/>
</dbReference>
<dbReference type="InterPro" id="IPR002453">
    <property type="entry name" value="Beta_tubulin"/>
</dbReference>
<dbReference type="InterPro" id="IPR008280">
    <property type="entry name" value="Tub_FtsZ_C"/>
</dbReference>
<dbReference type="InterPro" id="IPR000217">
    <property type="entry name" value="Tubulin"/>
</dbReference>
<dbReference type="InterPro" id="IPR037103">
    <property type="entry name" value="Tubulin/FtsZ-like_C"/>
</dbReference>
<dbReference type="InterPro" id="IPR018316">
    <property type="entry name" value="Tubulin/FtsZ_2-layer-sand-dom"/>
</dbReference>
<dbReference type="InterPro" id="IPR036525">
    <property type="entry name" value="Tubulin/FtsZ_GTPase_sf"/>
</dbReference>
<dbReference type="InterPro" id="IPR023123">
    <property type="entry name" value="Tubulin_C"/>
</dbReference>
<dbReference type="InterPro" id="IPR017975">
    <property type="entry name" value="Tubulin_CS"/>
</dbReference>
<dbReference type="InterPro" id="IPR003008">
    <property type="entry name" value="Tubulin_FtsZ_GTPase"/>
</dbReference>
<dbReference type="PANTHER" id="PTHR11588">
    <property type="entry name" value="TUBULIN"/>
    <property type="match status" value="1"/>
</dbReference>
<dbReference type="Pfam" id="PF00091">
    <property type="entry name" value="Tubulin"/>
    <property type="match status" value="1"/>
</dbReference>
<dbReference type="Pfam" id="PF03953">
    <property type="entry name" value="Tubulin_C"/>
    <property type="match status" value="1"/>
</dbReference>
<dbReference type="PRINTS" id="PR01163">
    <property type="entry name" value="BETATUBULIN"/>
</dbReference>
<dbReference type="PRINTS" id="PR01161">
    <property type="entry name" value="TUBULIN"/>
</dbReference>
<dbReference type="SMART" id="SM00864">
    <property type="entry name" value="Tubulin"/>
    <property type="match status" value="1"/>
</dbReference>
<dbReference type="SMART" id="SM00865">
    <property type="entry name" value="Tubulin_C"/>
    <property type="match status" value="1"/>
</dbReference>
<dbReference type="SUPFAM" id="SSF55307">
    <property type="entry name" value="Tubulin C-terminal domain-like"/>
    <property type="match status" value="1"/>
</dbReference>
<dbReference type="SUPFAM" id="SSF52490">
    <property type="entry name" value="Tubulin nucleotide-binding domain-like"/>
    <property type="match status" value="1"/>
</dbReference>
<dbReference type="PROSITE" id="PS00227">
    <property type="entry name" value="TUBULIN"/>
    <property type="match status" value="1"/>
</dbReference>
<dbReference type="PROSITE" id="PS00228">
    <property type="entry name" value="TUBULIN_B_AUTOREG"/>
    <property type="match status" value="1"/>
</dbReference>
<feature type="chain" id="PRO_0000048421" description="Tubulin beta chain">
    <location>
        <begin position="1"/>
        <end position="447"/>
    </location>
</feature>
<feature type="region of interest" description="Disordered" evidence="3">
    <location>
        <begin position="424"/>
        <end position="447"/>
    </location>
</feature>
<feature type="compositionally biased region" description="Acidic residues" evidence="3">
    <location>
        <begin position="432"/>
        <end position="447"/>
    </location>
</feature>
<feature type="binding site" evidence="2">
    <location>
        <position position="11"/>
    </location>
    <ligand>
        <name>GTP</name>
        <dbReference type="ChEBI" id="CHEBI:37565"/>
    </ligand>
</feature>
<feature type="binding site" evidence="1">
    <location>
        <position position="69"/>
    </location>
    <ligand>
        <name>GTP</name>
        <dbReference type="ChEBI" id="CHEBI:37565"/>
    </ligand>
</feature>
<feature type="binding site" evidence="1">
    <location>
        <position position="69"/>
    </location>
    <ligand>
        <name>Mg(2+)</name>
        <dbReference type="ChEBI" id="CHEBI:18420"/>
    </ligand>
</feature>
<feature type="binding site" evidence="2">
    <location>
        <position position="138"/>
    </location>
    <ligand>
        <name>GTP</name>
        <dbReference type="ChEBI" id="CHEBI:37565"/>
    </ligand>
</feature>
<feature type="binding site" evidence="2">
    <location>
        <position position="142"/>
    </location>
    <ligand>
        <name>GTP</name>
        <dbReference type="ChEBI" id="CHEBI:37565"/>
    </ligand>
</feature>
<feature type="binding site" evidence="2">
    <location>
        <position position="143"/>
    </location>
    <ligand>
        <name>GTP</name>
        <dbReference type="ChEBI" id="CHEBI:37565"/>
    </ligand>
</feature>
<feature type="binding site" evidence="2">
    <location>
        <position position="144"/>
    </location>
    <ligand>
        <name>GTP</name>
        <dbReference type="ChEBI" id="CHEBI:37565"/>
    </ligand>
</feature>
<feature type="binding site" evidence="2">
    <location>
        <position position="204"/>
    </location>
    <ligand>
        <name>GTP</name>
        <dbReference type="ChEBI" id="CHEBI:37565"/>
    </ligand>
</feature>
<feature type="binding site" evidence="2">
    <location>
        <position position="226"/>
    </location>
    <ligand>
        <name>GTP</name>
        <dbReference type="ChEBI" id="CHEBI:37565"/>
    </ligand>
</feature>
<evidence type="ECO:0000250" key="1">
    <source>
        <dbReference type="UniProtKB" id="P68363"/>
    </source>
</evidence>
<evidence type="ECO:0000250" key="2">
    <source>
        <dbReference type="UniProtKB" id="Q13509"/>
    </source>
</evidence>
<evidence type="ECO:0000256" key="3">
    <source>
        <dbReference type="SAM" id="MobiDB-lite"/>
    </source>
</evidence>
<evidence type="ECO:0000305" key="4"/>
<name>TBB_DOTSE</name>
<keyword id="KW-0963">Cytoplasm</keyword>
<keyword id="KW-0206">Cytoskeleton</keyword>
<keyword id="KW-0342">GTP-binding</keyword>
<keyword id="KW-0460">Magnesium</keyword>
<keyword id="KW-0479">Metal-binding</keyword>
<keyword id="KW-0493">Microtubule</keyword>
<keyword id="KW-0547">Nucleotide-binding</keyword>
<proteinExistence type="inferred from homology"/>
<comment type="function">
    <text>Tubulin is the major constituent of microtubules, a cylinder consisting of laterally associated linear protofilaments composed of alpha- and beta-tubulin heterodimers. Microtubules grow by the addition of GTP-tubulin dimers to the microtubule end, where a stabilizing cap forms. Below the cap, tubulin dimers are in GDP-bound state, owing to GTPase activity of alpha-tubulin.</text>
</comment>
<comment type="cofactor">
    <cofactor evidence="1">
        <name>Mg(2+)</name>
        <dbReference type="ChEBI" id="CHEBI:18420"/>
    </cofactor>
</comment>
<comment type="subunit">
    <text>Dimer of alpha and beta chains. A typical microtubule is a hollow water-filled tube with an outer diameter of 25 nm and an inner diameter of 15 nM. Alpha-beta heterodimers associate head-to-tail to form protofilaments running lengthwise along the microtubule wall with the beta-tubulin subunit facing the microtubule plus end conferring a structural polarity. Microtubules usually have 13 protofilaments but different protofilament numbers can be found in some organisms and specialized cells.</text>
</comment>
<comment type="subcellular location">
    <subcellularLocation>
        <location>Cytoplasm</location>
        <location>Cytoskeleton</location>
    </subcellularLocation>
</comment>
<comment type="similarity">
    <text evidence="4">Belongs to the tubulin family.</text>
</comment>